<proteinExistence type="inferred from homology"/>
<feature type="chain" id="PRO_0000224971" description="Small ribosomal subunit protein bS20">
    <location>
        <begin position="1"/>
        <end position="90"/>
    </location>
</feature>
<organism>
    <name type="scientific">Mesomycoplasma hyopneumoniae (strain J / ATCC 25934 / NCTC 10110)</name>
    <name type="common">Mycoplasma hyopneumoniae</name>
    <dbReference type="NCBI Taxonomy" id="262719"/>
    <lineage>
        <taxon>Bacteria</taxon>
        <taxon>Bacillati</taxon>
        <taxon>Mycoplasmatota</taxon>
        <taxon>Mycoplasmoidales</taxon>
        <taxon>Metamycoplasmataceae</taxon>
        <taxon>Mesomycoplasma</taxon>
    </lineage>
</organism>
<comment type="function">
    <text evidence="1">Binds directly to 16S ribosomal RNA.</text>
</comment>
<comment type="similarity">
    <text evidence="1">Belongs to the bacterial ribosomal protein bS20 family.</text>
</comment>
<gene>
    <name evidence="1" type="primary">rpsT</name>
    <name type="ordered locus">MHJ_0237</name>
</gene>
<name>RS20_MESHJ</name>
<protein>
    <recommendedName>
        <fullName evidence="1">Small ribosomal subunit protein bS20</fullName>
    </recommendedName>
    <alternativeName>
        <fullName evidence="2">30S ribosomal protein S20</fullName>
    </alternativeName>
</protein>
<sequence length="90" mass="9897">MANIKSKIKSITKMQKARAKNNAIKSRVKTAIKKAKIAISTDASNKSDLIAKAHSEISKAKSKGVFHKNKANRKISRLNLFANTYTTPAQ</sequence>
<evidence type="ECO:0000255" key="1">
    <source>
        <dbReference type="HAMAP-Rule" id="MF_00500"/>
    </source>
</evidence>
<evidence type="ECO:0000305" key="2"/>
<accession>Q4AA93</accession>
<keyword id="KW-0687">Ribonucleoprotein</keyword>
<keyword id="KW-0689">Ribosomal protein</keyword>
<keyword id="KW-0694">RNA-binding</keyword>
<keyword id="KW-0699">rRNA-binding</keyword>
<reference key="1">
    <citation type="journal article" date="2005" name="J. Bacteriol.">
        <title>Swine and poultry pathogens: the complete genome sequences of two strains of Mycoplasma hyopneumoniae and a strain of Mycoplasma synoviae.</title>
        <authorList>
            <person name="Vasconcelos A.T.R."/>
            <person name="Ferreira H.B."/>
            <person name="Bizarro C.V."/>
            <person name="Bonatto S.L."/>
            <person name="Carvalho M.O."/>
            <person name="Pinto P.M."/>
            <person name="Almeida D.F."/>
            <person name="Almeida L.G.P."/>
            <person name="Almeida R."/>
            <person name="Alves-Junior L."/>
            <person name="Assuncao E.N."/>
            <person name="Azevedo V.A.C."/>
            <person name="Bogo M.R."/>
            <person name="Brigido M.M."/>
            <person name="Brocchi M."/>
            <person name="Burity H.A."/>
            <person name="Camargo A.A."/>
            <person name="Camargo S.S."/>
            <person name="Carepo M.S."/>
            <person name="Carraro D.M."/>
            <person name="de Mattos Cascardo J.C."/>
            <person name="Castro L.A."/>
            <person name="Cavalcanti G."/>
            <person name="Chemale G."/>
            <person name="Collevatti R.G."/>
            <person name="Cunha C.W."/>
            <person name="Dallagiovanna B."/>
            <person name="Dambros B.P."/>
            <person name="Dellagostin O.A."/>
            <person name="Falcao C."/>
            <person name="Fantinatti-Garboggini F."/>
            <person name="Felipe M.S.S."/>
            <person name="Fiorentin L."/>
            <person name="Franco G.R."/>
            <person name="Freitas N.S.A."/>
            <person name="Frias D."/>
            <person name="Grangeiro T.B."/>
            <person name="Grisard E.C."/>
            <person name="Guimaraes C.T."/>
            <person name="Hungria M."/>
            <person name="Jardim S.N."/>
            <person name="Krieger M.A."/>
            <person name="Laurino J.P."/>
            <person name="Lima L.F.A."/>
            <person name="Lopes M.I."/>
            <person name="Loreto E.L.S."/>
            <person name="Madeira H.M.F."/>
            <person name="Manfio G.P."/>
            <person name="Maranhao A.Q."/>
            <person name="Martinkovics C.T."/>
            <person name="Medeiros S.R.B."/>
            <person name="Moreira M.A.M."/>
            <person name="Neiva M."/>
            <person name="Ramalho-Neto C.E."/>
            <person name="Nicolas M.F."/>
            <person name="Oliveira S.C."/>
            <person name="Paixao R.F.C."/>
            <person name="Pedrosa F.O."/>
            <person name="Pena S.D.J."/>
            <person name="Pereira M."/>
            <person name="Pereira-Ferrari L."/>
            <person name="Piffer I."/>
            <person name="Pinto L.S."/>
            <person name="Potrich D.P."/>
            <person name="Salim A.C.M."/>
            <person name="Santos F.R."/>
            <person name="Schmitt R."/>
            <person name="Schneider M.P.C."/>
            <person name="Schrank A."/>
            <person name="Schrank I.S."/>
            <person name="Schuck A.F."/>
            <person name="Seuanez H.N."/>
            <person name="Silva D.W."/>
            <person name="Silva R."/>
            <person name="Silva S.C."/>
            <person name="Soares C.M.A."/>
            <person name="Souza K.R.L."/>
            <person name="Souza R.C."/>
            <person name="Staats C.C."/>
            <person name="Steffens M.B.R."/>
            <person name="Teixeira S.M.R."/>
            <person name="Urmenyi T.P."/>
            <person name="Vainstein M.H."/>
            <person name="Zuccherato L.W."/>
            <person name="Simpson A.J.G."/>
            <person name="Zaha A."/>
        </authorList>
    </citation>
    <scope>NUCLEOTIDE SEQUENCE [LARGE SCALE GENOMIC DNA]</scope>
    <source>
        <strain>J / ATCC 25934 / NCTC 10110</strain>
    </source>
</reference>
<dbReference type="EMBL" id="AE017243">
    <property type="protein sequence ID" value="AAZ44328.1"/>
    <property type="molecule type" value="Genomic_DNA"/>
</dbReference>
<dbReference type="RefSeq" id="WP_011284019.1">
    <property type="nucleotide sequence ID" value="NC_007295.1"/>
</dbReference>
<dbReference type="SMR" id="Q4AA93"/>
<dbReference type="GeneID" id="41334542"/>
<dbReference type="KEGG" id="mhj:MHJ_0237"/>
<dbReference type="eggNOG" id="COG0268">
    <property type="taxonomic scope" value="Bacteria"/>
</dbReference>
<dbReference type="HOGENOM" id="CLU_160655_1_2_14"/>
<dbReference type="OrthoDB" id="9808392at2"/>
<dbReference type="Proteomes" id="UP000000548">
    <property type="component" value="Chromosome"/>
</dbReference>
<dbReference type="GO" id="GO:0005829">
    <property type="term" value="C:cytosol"/>
    <property type="evidence" value="ECO:0007669"/>
    <property type="project" value="TreeGrafter"/>
</dbReference>
<dbReference type="GO" id="GO:0015935">
    <property type="term" value="C:small ribosomal subunit"/>
    <property type="evidence" value="ECO:0007669"/>
    <property type="project" value="TreeGrafter"/>
</dbReference>
<dbReference type="GO" id="GO:0070181">
    <property type="term" value="F:small ribosomal subunit rRNA binding"/>
    <property type="evidence" value="ECO:0007669"/>
    <property type="project" value="TreeGrafter"/>
</dbReference>
<dbReference type="GO" id="GO:0003735">
    <property type="term" value="F:structural constituent of ribosome"/>
    <property type="evidence" value="ECO:0007669"/>
    <property type="project" value="InterPro"/>
</dbReference>
<dbReference type="GO" id="GO:0006412">
    <property type="term" value="P:translation"/>
    <property type="evidence" value="ECO:0007669"/>
    <property type="project" value="UniProtKB-UniRule"/>
</dbReference>
<dbReference type="Gene3D" id="1.20.58.110">
    <property type="entry name" value="Ribosomal protein S20"/>
    <property type="match status" value="1"/>
</dbReference>
<dbReference type="HAMAP" id="MF_00500">
    <property type="entry name" value="Ribosomal_bS20"/>
    <property type="match status" value="1"/>
</dbReference>
<dbReference type="InterPro" id="IPR002583">
    <property type="entry name" value="Ribosomal_bS20"/>
</dbReference>
<dbReference type="InterPro" id="IPR036510">
    <property type="entry name" value="Ribosomal_bS20_sf"/>
</dbReference>
<dbReference type="NCBIfam" id="TIGR00029">
    <property type="entry name" value="S20"/>
    <property type="match status" value="1"/>
</dbReference>
<dbReference type="PANTHER" id="PTHR33398">
    <property type="entry name" value="30S RIBOSOMAL PROTEIN S20"/>
    <property type="match status" value="1"/>
</dbReference>
<dbReference type="PANTHER" id="PTHR33398:SF1">
    <property type="entry name" value="SMALL RIBOSOMAL SUBUNIT PROTEIN BS20C"/>
    <property type="match status" value="1"/>
</dbReference>
<dbReference type="Pfam" id="PF01649">
    <property type="entry name" value="Ribosomal_S20p"/>
    <property type="match status" value="1"/>
</dbReference>
<dbReference type="SUPFAM" id="SSF46992">
    <property type="entry name" value="Ribosomal protein S20"/>
    <property type="match status" value="1"/>
</dbReference>